<keyword id="KW-0408">Iron</keyword>
<feature type="chain" id="PRO_1000045066" description="Probable Fe(2+)-trafficking protein">
    <location>
        <begin position="1"/>
        <end position="92"/>
    </location>
</feature>
<dbReference type="EMBL" id="CP000681">
    <property type="protein sequence ID" value="ABP76420.1"/>
    <property type="molecule type" value="Genomic_DNA"/>
</dbReference>
<dbReference type="SMR" id="A4Y8Y7"/>
<dbReference type="STRING" id="319224.Sputcn32_2701"/>
<dbReference type="KEGG" id="spc:Sputcn32_2701"/>
<dbReference type="eggNOG" id="COG2924">
    <property type="taxonomic scope" value="Bacteria"/>
</dbReference>
<dbReference type="HOGENOM" id="CLU_170994_0_0_6"/>
<dbReference type="GO" id="GO:0005829">
    <property type="term" value="C:cytosol"/>
    <property type="evidence" value="ECO:0007669"/>
    <property type="project" value="TreeGrafter"/>
</dbReference>
<dbReference type="GO" id="GO:0005506">
    <property type="term" value="F:iron ion binding"/>
    <property type="evidence" value="ECO:0007669"/>
    <property type="project" value="UniProtKB-UniRule"/>
</dbReference>
<dbReference type="GO" id="GO:0034599">
    <property type="term" value="P:cellular response to oxidative stress"/>
    <property type="evidence" value="ECO:0007669"/>
    <property type="project" value="TreeGrafter"/>
</dbReference>
<dbReference type="FunFam" id="1.10.3880.10:FF:000001">
    <property type="entry name" value="Probable Fe(2+)-trafficking protein"/>
    <property type="match status" value="1"/>
</dbReference>
<dbReference type="Gene3D" id="1.10.3880.10">
    <property type="entry name" value="Fe(II) trafficking protein YggX"/>
    <property type="match status" value="1"/>
</dbReference>
<dbReference type="HAMAP" id="MF_00686">
    <property type="entry name" value="Fe_traffic_YggX"/>
    <property type="match status" value="1"/>
</dbReference>
<dbReference type="InterPro" id="IPR007457">
    <property type="entry name" value="Fe_traffick_prot_YggX"/>
</dbReference>
<dbReference type="InterPro" id="IPR036766">
    <property type="entry name" value="Fe_traffick_prot_YggX_sf"/>
</dbReference>
<dbReference type="NCBIfam" id="NF003817">
    <property type="entry name" value="PRK05408.1"/>
    <property type="match status" value="1"/>
</dbReference>
<dbReference type="PANTHER" id="PTHR36965">
    <property type="entry name" value="FE(2+)-TRAFFICKING PROTEIN-RELATED"/>
    <property type="match status" value="1"/>
</dbReference>
<dbReference type="PANTHER" id="PTHR36965:SF1">
    <property type="entry name" value="FE(2+)-TRAFFICKING PROTEIN-RELATED"/>
    <property type="match status" value="1"/>
</dbReference>
<dbReference type="Pfam" id="PF04362">
    <property type="entry name" value="Iron_traffic"/>
    <property type="match status" value="1"/>
</dbReference>
<dbReference type="PIRSF" id="PIRSF029827">
    <property type="entry name" value="Fe_traffic_YggX"/>
    <property type="match status" value="1"/>
</dbReference>
<dbReference type="SUPFAM" id="SSF111148">
    <property type="entry name" value="YggX-like"/>
    <property type="match status" value="1"/>
</dbReference>
<sequence>MARTVNCVYLNKEADGLDFQLYPGDLGKRIFDNISKEAWGLWQKKQTMLINEKKLNMMNVDDRKFLEEQMTSFLFEGKEVEIEGFVPEKDQD</sequence>
<gene>
    <name type="ordered locus">Sputcn32_2701</name>
</gene>
<comment type="function">
    <text evidence="1">Could be a mediator in iron transactions between iron acquisition and iron-requiring processes, such as synthesis and/or repair of Fe-S clusters in biosynthetic enzymes.</text>
</comment>
<comment type="similarity">
    <text evidence="1">Belongs to the Fe(2+)-trafficking protein family.</text>
</comment>
<reference key="1">
    <citation type="submission" date="2007-04" db="EMBL/GenBank/DDBJ databases">
        <title>Complete sequence of Shewanella putrefaciens CN-32.</title>
        <authorList>
            <consortium name="US DOE Joint Genome Institute"/>
            <person name="Copeland A."/>
            <person name="Lucas S."/>
            <person name="Lapidus A."/>
            <person name="Barry K."/>
            <person name="Detter J.C."/>
            <person name="Glavina del Rio T."/>
            <person name="Hammon N."/>
            <person name="Israni S."/>
            <person name="Dalin E."/>
            <person name="Tice H."/>
            <person name="Pitluck S."/>
            <person name="Chain P."/>
            <person name="Malfatti S."/>
            <person name="Shin M."/>
            <person name="Vergez L."/>
            <person name="Schmutz J."/>
            <person name="Larimer F."/>
            <person name="Land M."/>
            <person name="Hauser L."/>
            <person name="Kyrpides N."/>
            <person name="Mikhailova N."/>
            <person name="Romine M.F."/>
            <person name="Fredrickson J."/>
            <person name="Tiedje J."/>
            <person name="Richardson P."/>
        </authorList>
    </citation>
    <scope>NUCLEOTIDE SEQUENCE [LARGE SCALE GENOMIC DNA]</scope>
    <source>
        <strain>CN-32 / ATCC BAA-453</strain>
    </source>
</reference>
<name>FETP_SHEPC</name>
<protein>
    <recommendedName>
        <fullName evidence="1">Probable Fe(2+)-trafficking protein</fullName>
    </recommendedName>
</protein>
<accession>A4Y8Y7</accession>
<proteinExistence type="inferred from homology"/>
<evidence type="ECO:0000255" key="1">
    <source>
        <dbReference type="HAMAP-Rule" id="MF_00686"/>
    </source>
</evidence>
<organism>
    <name type="scientific">Shewanella putrefaciens (strain CN-32 / ATCC BAA-453)</name>
    <dbReference type="NCBI Taxonomy" id="319224"/>
    <lineage>
        <taxon>Bacteria</taxon>
        <taxon>Pseudomonadati</taxon>
        <taxon>Pseudomonadota</taxon>
        <taxon>Gammaproteobacteria</taxon>
        <taxon>Alteromonadales</taxon>
        <taxon>Shewanellaceae</taxon>
        <taxon>Shewanella</taxon>
    </lineage>
</organism>